<proteinExistence type="evidence at protein level"/>
<dbReference type="EMBL" id="D86215">
    <property type="protein sequence ID" value="BAA13045.1"/>
    <property type="molecule type" value="mRNA"/>
</dbReference>
<dbReference type="EMBL" id="BC059148">
    <property type="protein sequence ID" value="AAH59148.1"/>
    <property type="molecule type" value="mRNA"/>
</dbReference>
<dbReference type="RefSeq" id="NP_037117.1">
    <property type="nucleotide sequence ID" value="NM_012985.3"/>
</dbReference>
<dbReference type="SMR" id="Q63362"/>
<dbReference type="BioGRID" id="247521">
    <property type="interactions" value="1"/>
</dbReference>
<dbReference type="FunCoup" id="Q63362">
    <property type="interactions" value="2352"/>
</dbReference>
<dbReference type="STRING" id="10116.ENSRNOP00000008325"/>
<dbReference type="CarbonylDB" id="Q63362"/>
<dbReference type="iPTMnet" id="Q63362"/>
<dbReference type="PhosphoSitePlus" id="Q63362"/>
<dbReference type="jPOST" id="Q63362"/>
<dbReference type="PaxDb" id="10116-ENSRNOP00000008325"/>
<dbReference type="Ensembl" id="ENSRNOT00000096026.1">
    <property type="protein sequence ID" value="ENSRNOP00000078262.1"/>
    <property type="gene ID" value="ENSRNOG00000071062.1"/>
</dbReference>
<dbReference type="GeneID" id="25488"/>
<dbReference type="KEGG" id="rno:25488"/>
<dbReference type="UCSC" id="RGD:3155">
    <property type="organism name" value="rat"/>
</dbReference>
<dbReference type="AGR" id="RGD:3155"/>
<dbReference type="CTD" id="4698"/>
<dbReference type="RGD" id="3155">
    <property type="gene designation" value="Ndufa5"/>
</dbReference>
<dbReference type="eggNOG" id="KOG3365">
    <property type="taxonomic scope" value="Eukaryota"/>
</dbReference>
<dbReference type="GeneTree" id="ENSGT00390000008099"/>
<dbReference type="HOGENOM" id="CLU_099943_2_0_1"/>
<dbReference type="InParanoid" id="Q63362"/>
<dbReference type="OMA" id="ENQWKWP"/>
<dbReference type="OrthoDB" id="286811at2759"/>
<dbReference type="PhylomeDB" id="Q63362"/>
<dbReference type="TreeFam" id="TF313785"/>
<dbReference type="Reactome" id="R-RNO-611105">
    <property type="pathway name" value="Respiratory electron transport"/>
</dbReference>
<dbReference type="Reactome" id="R-RNO-6799198">
    <property type="pathway name" value="Complex I biogenesis"/>
</dbReference>
<dbReference type="Reactome" id="R-RNO-9013408">
    <property type="pathway name" value="RHOG GTPase cycle"/>
</dbReference>
<dbReference type="PRO" id="PR:Q63362"/>
<dbReference type="Proteomes" id="UP000002494">
    <property type="component" value="Chromosome 4"/>
</dbReference>
<dbReference type="Bgee" id="ENSRNOG00000005698">
    <property type="expression patterns" value="Expressed in heart and 20 other cell types or tissues"/>
</dbReference>
<dbReference type="GO" id="GO:0005743">
    <property type="term" value="C:mitochondrial inner membrane"/>
    <property type="evidence" value="ECO:0000266"/>
    <property type="project" value="RGD"/>
</dbReference>
<dbReference type="GO" id="GO:0032991">
    <property type="term" value="C:protein-containing complex"/>
    <property type="evidence" value="ECO:0000314"/>
    <property type="project" value="RGD"/>
</dbReference>
<dbReference type="GO" id="GO:0045271">
    <property type="term" value="C:respiratory chain complex I"/>
    <property type="evidence" value="ECO:0000250"/>
    <property type="project" value="UniProtKB"/>
</dbReference>
<dbReference type="GO" id="GO:0022904">
    <property type="term" value="P:respiratory electron transport chain"/>
    <property type="evidence" value="ECO:0000266"/>
    <property type="project" value="RGD"/>
</dbReference>
<dbReference type="InterPro" id="IPR006806">
    <property type="entry name" value="NDUFA5"/>
</dbReference>
<dbReference type="PANTHER" id="PTHR12653:SF0">
    <property type="entry name" value="NADH DEHYDROGENASE [UBIQUINONE] 1 ALPHA SUBCOMPLEX SUBUNIT 5"/>
    <property type="match status" value="1"/>
</dbReference>
<dbReference type="PANTHER" id="PTHR12653">
    <property type="entry name" value="NADH-UBIQUINONE OXIDOREDUCTASE 13 KD-B SUBUNIT"/>
    <property type="match status" value="1"/>
</dbReference>
<dbReference type="Pfam" id="PF04716">
    <property type="entry name" value="ETC_C1_NDUFA5"/>
    <property type="match status" value="1"/>
</dbReference>
<accession>Q63362</accession>
<gene>
    <name type="primary">Ndufa5</name>
</gene>
<evidence type="ECO:0000250" key="1">
    <source>
        <dbReference type="UniProtKB" id="P23935"/>
    </source>
</evidence>
<evidence type="ECO:0000250" key="2">
    <source>
        <dbReference type="UniProtKB" id="Q16718"/>
    </source>
</evidence>
<evidence type="ECO:0000250" key="3">
    <source>
        <dbReference type="UniProtKB" id="Q9CPP6"/>
    </source>
</evidence>
<evidence type="ECO:0000305" key="4"/>
<evidence type="ECO:0007744" key="5">
    <source>
    </source>
</evidence>
<organism>
    <name type="scientific">Rattus norvegicus</name>
    <name type="common">Rat</name>
    <dbReference type="NCBI Taxonomy" id="10116"/>
    <lineage>
        <taxon>Eukaryota</taxon>
        <taxon>Metazoa</taxon>
        <taxon>Chordata</taxon>
        <taxon>Craniata</taxon>
        <taxon>Vertebrata</taxon>
        <taxon>Euteleostomi</taxon>
        <taxon>Mammalia</taxon>
        <taxon>Eutheria</taxon>
        <taxon>Euarchontoglires</taxon>
        <taxon>Glires</taxon>
        <taxon>Rodentia</taxon>
        <taxon>Myomorpha</taxon>
        <taxon>Muroidea</taxon>
        <taxon>Muridae</taxon>
        <taxon>Murinae</taxon>
        <taxon>Rattus</taxon>
    </lineage>
</organism>
<sequence>MAGLVKKTTGLVGLAVCDTPHERLTILYTKILDLLKHFPKHAAYRKYTEQITSEKLELVKLEPDVKKLENLLQGGEVEEVILQAEKELSLARKMLQWKPWEPLVEEPPANQWKWPI</sequence>
<reference key="1">
    <citation type="journal article" date="1996" name="Neurol. Res.">
        <title>Molecular cloning of the rat NADH:ubiquinone oxidoreductase subunit and its up-regulation in the facial muscle after denervation: detected by means of differential display.</title>
        <authorList>
            <person name="Kitahara T."/>
            <person name="Takeda N."/>
            <person name="Kubo T."/>
            <person name="Kiyama H."/>
        </authorList>
    </citation>
    <scope>NUCLEOTIDE SEQUENCE [MRNA]</scope>
    <source>
        <strain>Wistar</strain>
        <tissue>Brain</tissue>
    </source>
</reference>
<reference key="2">
    <citation type="journal article" date="2004" name="Genome Res.">
        <title>The status, quality, and expansion of the NIH full-length cDNA project: the Mammalian Gene Collection (MGC).</title>
        <authorList>
            <consortium name="The MGC Project Team"/>
        </authorList>
    </citation>
    <scope>NUCLEOTIDE SEQUENCE [LARGE SCALE MRNA]</scope>
    <source>
        <tissue>Pituitary</tissue>
    </source>
</reference>
<reference key="3">
    <citation type="submission" date="2006-11" db="UniProtKB">
        <authorList>
            <person name="Lubec G."/>
            <person name="Afjehi-Sadat L."/>
        </authorList>
    </citation>
    <scope>PROTEIN SEQUENCE OF 8-23 AND 67-86</scope>
    <scope>IDENTIFICATION BY MASS SPECTROMETRY</scope>
    <source>
        <strain>Sprague-Dawley</strain>
        <tissue>Spinal cord</tissue>
    </source>
</reference>
<reference key="4">
    <citation type="journal article" date="2012" name="Nat. Commun.">
        <title>Quantitative maps of protein phosphorylation sites across 14 different rat organs and tissues.</title>
        <authorList>
            <person name="Lundby A."/>
            <person name="Secher A."/>
            <person name="Lage K."/>
            <person name="Nordsborg N.B."/>
            <person name="Dmytriyev A."/>
            <person name="Lundby C."/>
            <person name="Olsen J.V."/>
        </authorList>
    </citation>
    <scope>PHOSPHORYLATION [LARGE SCALE ANALYSIS] AT SER-89</scope>
    <scope>IDENTIFICATION BY MASS SPECTROMETRY [LARGE SCALE ANALYSIS]</scope>
</reference>
<comment type="function">
    <text evidence="2">Accessory subunit of the mitochondrial membrane respiratory chain NADH dehydrogenase (Complex I), that is believed not to be involved in catalysis. Complex I functions in the transfer of electrons from NADH to the respiratory chain. The immediate electron acceptor for the enzyme is believed to be ubiquinone.</text>
</comment>
<comment type="subunit">
    <text evidence="2">Complex I is composed of 45 different subunits.</text>
</comment>
<comment type="subcellular location">
    <subcellularLocation>
        <location evidence="2">Mitochondrion inner membrane</location>
        <topology evidence="2">Peripheral membrane protein</topology>
        <orientation evidence="2">Matrix side</orientation>
    </subcellularLocation>
</comment>
<comment type="similarity">
    <text evidence="4">Belongs to the complex I NDUFA5 subunit family.</text>
</comment>
<protein>
    <recommendedName>
        <fullName>NADH dehydrogenase [ubiquinone] 1 alpha subcomplex subunit 5</fullName>
    </recommendedName>
    <alternativeName>
        <fullName>Complex I subunit B13</fullName>
    </alternativeName>
    <alternativeName>
        <fullName>Complex I-13kD-B</fullName>
        <shortName>CI-13kD-B</shortName>
    </alternativeName>
    <alternativeName>
        <fullName>NADH-ubiquinone oxidoreductase 13 kDa-B subunit</fullName>
    </alternativeName>
</protein>
<feature type="initiator methionine" description="Removed" evidence="1">
    <location>
        <position position="1"/>
    </location>
</feature>
<feature type="chain" id="PRO_0000118634" description="NADH dehydrogenase [ubiquinone] 1 alpha subcomplex subunit 5">
    <location>
        <begin position="2"/>
        <end position="116"/>
    </location>
</feature>
<feature type="modified residue" description="N-acetylalanine" evidence="1">
    <location>
        <position position="2"/>
    </location>
</feature>
<feature type="modified residue" description="N6-acetyllysine" evidence="2">
    <location>
        <position position="30"/>
    </location>
</feature>
<feature type="modified residue" description="N6-acetyllysine" evidence="3">
    <location>
        <position position="46"/>
    </location>
</feature>
<feature type="modified residue" description="N6-acetyllysine" evidence="2">
    <location>
        <position position="60"/>
    </location>
</feature>
<feature type="modified residue" description="Phosphoserine" evidence="5">
    <location>
        <position position="89"/>
    </location>
</feature>
<feature type="modified residue" description="N6-acetyllysine; alternate" evidence="3">
    <location>
        <position position="98"/>
    </location>
</feature>
<feature type="modified residue" description="N6-succinyllysine; alternate" evidence="3">
    <location>
        <position position="98"/>
    </location>
</feature>
<name>NDUA5_RAT</name>
<keyword id="KW-0007">Acetylation</keyword>
<keyword id="KW-0903">Direct protein sequencing</keyword>
<keyword id="KW-0249">Electron transport</keyword>
<keyword id="KW-0472">Membrane</keyword>
<keyword id="KW-0496">Mitochondrion</keyword>
<keyword id="KW-0999">Mitochondrion inner membrane</keyword>
<keyword id="KW-0597">Phosphoprotein</keyword>
<keyword id="KW-1185">Reference proteome</keyword>
<keyword id="KW-0679">Respiratory chain</keyword>
<keyword id="KW-0813">Transport</keyword>